<evidence type="ECO:0000255" key="1">
    <source>
        <dbReference type="HAMAP-Rule" id="MF_01865"/>
    </source>
</evidence>
<evidence type="ECO:0000255" key="2">
    <source>
        <dbReference type="PROSITE-ProRule" id="PRU01266"/>
    </source>
</evidence>
<organism>
    <name type="scientific">Helicobacter pylori (strain Shi470)</name>
    <dbReference type="NCBI Taxonomy" id="512562"/>
    <lineage>
        <taxon>Bacteria</taxon>
        <taxon>Pseudomonadati</taxon>
        <taxon>Campylobacterota</taxon>
        <taxon>Epsilonproteobacteria</taxon>
        <taxon>Campylobacterales</taxon>
        <taxon>Helicobacteraceae</taxon>
        <taxon>Helicobacter</taxon>
    </lineage>
</organism>
<name>RIMO_HELPS</name>
<feature type="chain" id="PRO_0000374860" description="Ribosomal protein uS12 methylthiotransferase RimO">
    <location>
        <begin position="1"/>
        <end position="439"/>
    </location>
</feature>
<feature type="domain" description="MTTase N-terminal" evidence="1">
    <location>
        <begin position="7"/>
        <end position="119"/>
    </location>
</feature>
<feature type="domain" description="Radical SAM core" evidence="2">
    <location>
        <begin position="137"/>
        <end position="365"/>
    </location>
</feature>
<feature type="binding site" evidence="1">
    <location>
        <position position="16"/>
    </location>
    <ligand>
        <name>[4Fe-4S] cluster</name>
        <dbReference type="ChEBI" id="CHEBI:49883"/>
        <label>1</label>
    </ligand>
</feature>
<feature type="binding site" evidence="1">
    <location>
        <position position="50"/>
    </location>
    <ligand>
        <name>[4Fe-4S] cluster</name>
        <dbReference type="ChEBI" id="CHEBI:49883"/>
        <label>1</label>
    </ligand>
</feature>
<feature type="binding site" evidence="1">
    <location>
        <position position="82"/>
    </location>
    <ligand>
        <name>[4Fe-4S] cluster</name>
        <dbReference type="ChEBI" id="CHEBI:49883"/>
        <label>1</label>
    </ligand>
</feature>
<feature type="binding site" evidence="1">
    <location>
        <position position="151"/>
    </location>
    <ligand>
        <name>[4Fe-4S] cluster</name>
        <dbReference type="ChEBI" id="CHEBI:49883"/>
        <label>2</label>
        <note>4Fe-4S-S-AdoMet</note>
    </ligand>
</feature>
<feature type="binding site" evidence="1">
    <location>
        <position position="155"/>
    </location>
    <ligand>
        <name>[4Fe-4S] cluster</name>
        <dbReference type="ChEBI" id="CHEBI:49883"/>
        <label>2</label>
        <note>4Fe-4S-S-AdoMet</note>
    </ligand>
</feature>
<feature type="binding site" evidence="1">
    <location>
        <position position="158"/>
    </location>
    <ligand>
        <name>[4Fe-4S] cluster</name>
        <dbReference type="ChEBI" id="CHEBI:49883"/>
        <label>2</label>
        <note>4Fe-4S-S-AdoMet</note>
    </ligand>
</feature>
<comment type="function">
    <text evidence="1">Catalyzes the methylthiolation of an aspartic acid residue of ribosomal protein uS12.</text>
</comment>
<comment type="catalytic activity">
    <reaction evidence="1">
        <text>L-aspartate(89)-[ribosomal protein uS12]-hydrogen + (sulfur carrier)-SH + AH2 + 2 S-adenosyl-L-methionine = 3-methylsulfanyl-L-aspartate(89)-[ribosomal protein uS12]-hydrogen + (sulfur carrier)-H + 5'-deoxyadenosine + L-methionine + A + S-adenosyl-L-homocysteine + 2 H(+)</text>
        <dbReference type="Rhea" id="RHEA:37087"/>
        <dbReference type="Rhea" id="RHEA-COMP:10460"/>
        <dbReference type="Rhea" id="RHEA-COMP:10461"/>
        <dbReference type="Rhea" id="RHEA-COMP:14737"/>
        <dbReference type="Rhea" id="RHEA-COMP:14739"/>
        <dbReference type="ChEBI" id="CHEBI:13193"/>
        <dbReference type="ChEBI" id="CHEBI:15378"/>
        <dbReference type="ChEBI" id="CHEBI:17319"/>
        <dbReference type="ChEBI" id="CHEBI:17499"/>
        <dbReference type="ChEBI" id="CHEBI:29917"/>
        <dbReference type="ChEBI" id="CHEBI:29961"/>
        <dbReference type="ChEBI" id="CHEBI:57844"/>
        <dbReference type="ChEBI" id="CHEBI:57856"/>
        <dbReference type="ChEBI" id="CHEBI:59789"/>
        <dbReference type="ChEBI" id="CHEBI:64428"/>
        <dbReference type="ChEBI" id="CHEBI:73599"/>
        <dbReference type="EC" id="2.8.4.4"/>
    </reaction>
</comment>
<comment type="cofactor">
    <cofactor evidence="1">
        <name>[4Fe-4S] cluster</name>
        <dbReference type="ChEBI" id="CHEBI:49883"/>
    </cofactor>
    <text evidence="1">Binds 2 [4Fe-4S] clusters. One cluster is coordinated with 3 cysteines and an exchangeable S-adenosyl-L-methionine.</text>
</comment>
<comment type="subcellular location">
    <subcellularLocation>
        <location evidence="1">Cytoplasm</location>
    </subcellularLocation>
</comment>
<comment type="similarity">
    <text evidence="1">Belongs to the methylthiotransferase family. RimO subfamily.</text>
</comment>
<reference key="1">
    <citation type="submission" date="2008-05" db="EMBL/GenBank/DDBJ databases">
        <title>Genome sequence of Helicobacter pylori from the remote Amazon: traces of Asian ancestry of the first Americans.</title>
        <authorList>
            <person name="Kersulyte D."/>
            <person name="Kalia A."/>
            <person name="Gilman R.H."/>
            <person name="Berg D.E."/>
        </authorList>
    </citation>
    <scope>NUCLEOTIDE SEQUENCE [LARGE SCALE GENOMIC DNA]</scope>
    <source>
        <strain>Shi470</strain>
    </source>
</reference>
<dbReference type="EC" id="2.8.4.4" evidence="1"/>
<dbReference type="EMBL" id="CP001072">
    <property type="protein sequence ID" value="ACD48080.1"/>
    <property type="molecule type" value="Genomic_DNA"/>
</dbReference>
<dbReference type="RefSeq" id="WP_001165898.1">
    <property type="nucleotide sequence ID" value="NC_010698.2"/>
</dbReference>
<dbReference type="SMR" id="B2UT98"/>
<dbReference type="KEGG" id="hps:HPSH_03170"/>
<dbReference type="HOGENOM" id="CLU_018697_0_1_7"/>
<dbReference type="GO" id="GO:0005829">
    <property type="term" value="C:cytosol"/>
    <property type="evidence" value="ECO:0007669"/>
    <property type="project" value="TreeGrafter"/>
</dbReference>
<dbReference type="GO" id="GO:0051539">
    <property type="term" value="F:4 iron, 4 sulfur cluster binding"/>
    <property type="evidence" value="ECO:0007669"/>
    <property type="project" value="UniProtKB-UniRule"/>
</dbReference>
<dbReference type="GO" id="GO:0035599">
    <property type="term" value="F:aspartic acid methylthiotransferase activity"/>
    <property type="evidence" value="ECO:0007669"/>
    <property type="project" value="TreeGrafter"/>
</dbReference>
<dbReference type="GO" id="GO:0046872">
    <property type="term" value="F:metal ion binding"/>
    <property type="evidence" value="ECO:0007669"/>
    <property type="project" value="UniProtKB-KW"/>
</dbReference>
<dbReference type="GO" id="GO:0103039">
    <property type="term" value="F:protein methylthiotransferase activity"/>
    <property type="evidence" value="ECO:0007669"/>
    <property type="project" value="UniProtKB-EC"/>
</dbReference>
<dbReference type="GO" id="GO:0006400">
    <property type="term" value="P:tRNA modification"/>
    <property type="evidence" value="ECO:0007669"/>
    <property type="project" value="InterPro"/>
</dbReference>
<dbReference type="CDD" id="cd01335">
    <property type="entry name" value="Radical_SAM"/>
    <property type="match status" value="1"/>
</dbReference>
<dbReference type="FunFam" id="3.40.50.12160:FF:000010">
    <property type="entry name" value="Ribosomal protein S12 methylthiotransferase RimO"/>
    <property type="match status" value="1"/>
</dbReference>
<dbReference type="Gene3D" id="3.40.50.12160">
    <property type="entry name" value="Methylthiotransferase, N-terminal domain"/>
    <property type="match status" value="1"/>
</dbReference>
<dbReference type="Gene3D" id="3.80.30.20">
    <property type="entry name" value="tm_1862 like domain"/>
    <property type="match status" value="1"/>
</dbReference>
<dbReference type="HAMAP" id="MF_01865">
    <property type="entry name" value="MTTase_RimO"/>
    <property type="match status" value="1"/>
</dbReference>
<dbReference type="InterPro" id="IPR006638">
    <property type="entry name" value="Elp3/MiaA/NifB-like_rSAM"/>
</dbReference>
<dbReference type="InterPro" id="IPR005839">
    <property type="entry name" value="Methylthiotransferase"/>
</dbReference>
<dbReference type="InterPro" id="IPR020612">
    <property type="entry name" value="Methylthiotransferase_CS"/>
</dbReference>
<dbReference type="InterPro" id="IPR013848">
    <property type="entry name" value="Methylthiotransferase_N"/>
</dbReference>
<dbReference type="InterPro" id="IPR038135">
    <property type="entry name" value="Methylthiotransferase_N_sf"/>
</dbReference>
<dbReference type="InterPro" id="IPR005840">
    <property type="entry name" value="Ribosomal_uS12_MeSTrfase_RimO"/>
</dbReference>
<dbReference type="InterPro" id="IPR007197">
    <property type="entry name" value="rSAM"/>
</dbReference>
<dbReference type="InterPro" id="IPR023404">
    <property type="entry name" value="rSAM_horseshoe"/>
</dbReference>
<dbReference type="NCBIfam" id="TIGR01125">
    <property type="entry name" value="30S ribosomal protein S12 methylthiotransferase RimO"/>
    <property type="match status" value="1"/>
</dbReference>
<dbReference type="NCBIfam" id="TIGR00089">
    <property type="entry name" value="MiaB/RimO family radical SAM methylthiotransferase"/>
    <property type="match status" value="1"/>
</dbReference>
<dbReference type="PANTHER" id="PTHR43837">
    <property type="entry name" value="RIBOSOMAL PROTEIN S12 METHYLTHIOTRANSFERASE RIMO"/>
    <property type="match status" value="1"/>
</dbReference>
<dbReference type="PANTHER" id="PTHR43837:SF1">
    <property type="entry name" value="RIBOSOMAL PROTEIN US12 METHYLTHIOTRANSFERASE RIMO"/>
    <property type="match status" value="1"/>
</dbReference>
<dbReference type="Pfam" id="PF04055">
    <property type="entry name" value="Radical_SAM"/>
    <property type="match status" value="1"/>
</dbReference>
<dbReference type="Pfam" id="PF00919">
    <property type="entry name" value="UPF0004"/>
    <property type="match status" value="1"/>
</dbReference>
<dbReference type="SFLD" id="SFLDG01082">
    <property type="entry name" value="B12-binding_domain_containing"/>
    <property type="match status" value="1"/>
</dbReference>
<dbReference type="SFLD" id="SFLDS00029">
    <property type="entry name" value="Radical_SAM"/>
    <property type="match status" value="1"/>
</dbReference>
<dbReference type="SFLD" id="SFLDF00274">
    <property type="entry name" value="ribosomal_protein_S12_methylth"/>
    <property type="match status" value="1"/>
</dbReference>
<dbReference type="SMART" id="SM00729">
    <property type="entry name" value="Elp3"/>
    <property type="match status" value="1"/>
</dbReference>
<dbReference type="SUPFAM" id="SSF102114">
    <property type="entry name" value="Radical SAM enzymes"/>
    <property type="match status" value="1"/>
</dbReference>
<dbReference type="PROSITE" id="PS51449">
    <property type="entry name" value="MTTASE_N"/>
    <property type="match status" value="1"/>
</dbReference>
<dbReference type="PROSITE" id="PS01278">
    <property type="entry name" value="MTTASE_RADICAL"/>
    <property type="match status" value="1"/>
</dbReference>
<dbReference type="PROSITE" id="PS51918">
    <property type="entry name" value="RADICAL_SAM"/>
    <property type="match status" value="1"/>
</dbReference>
<gene>
    <name evidence="1" type="primary">rimO</name>
    <name type="ordered locus">HPSH_03170</name>
</gene>
<accession>B2UT98</accession>
<protein>
    <recommendedName>
        <fullName evidence="1">Ribosomal protein uS12 methylthiotransferase RimO</fullName>
        <shortName evidence="1">uS12 MTTase</shortName>
        <shortName evidence="1">uS12 methylthiotransferase</shortName>
        <ecNumber evidence="1">2.8.4.4</ecNumber>
    </recommendedName>
    <alternativeName>
        <fullName evidence="1">Ribosomal protein uS12 (aspartate-C(3))-methylthiotransferase</fullName>
    </alternativeName>
    <alternativeName>
        <fullName evidence="1">Ribosome maturation factor RimO</fullName>
    </alternativeName>
</protein>
<keyword id="KW-0004">4Fe-4S</keyword>
<keyword id="KW-0963">Cytoplasm</keyword>
<keyword id="KW-0408">Iron</keyword>
<keyword id="KW-0411">Iron-sulfur</keyword>
<keyword id="KW-0479">Metal-binding</keyword>
<keyword id="KW-0949">S-adenosyl-L-methionine</keyword>
<keyword id="KW-0808">Transferase</keyword>
<proteinExistence type="inferred from homology"/>
<sequence length="439" mass="49599">MQIKENKQLCLISLGCSKNLVDSEVMLGKLYNYTLTNDTKSADVILINTCGFIESAKQESIQTILNAAKDKKKGAILIASGCLSERYKDEIKELIPEVDIFTGVGDYDKIDIMIAKKQNQFSEQVFLSEHYNARIITGSSVHAYVKISEGCNQKCSFCAIPSFKGKLQSRELDSILKEAENLALKGYTDMTFIAQDSSSFLYDKGQKDGLIQLISAIDKQQALKSARILYLYPSSTTLELISTIESSPIFQNYFDMPIQHISDSMLKKMRRNSSQAHHLKLLDAMKQVKESFIRSTIIVGHPEENEGEFEELSAFLDEFRFDRLNIFAFSAEENTHAYSLEKVPKKIINARIKALNKIALKHQNNSFKALLNKPIKALVENKEGEYFYKARDLRWAPEVDGEILINDSELATPLKPGHYTIMPSAFKDNILLAKVLSPF</sequence>